<keyword id="KW-0067">ATP-binding</keyword>
<keyword id="KW-0997">Cell inner membrane</keyword>
<keyword id="KW-1003">Cell membrane</keyword>
<keyword id="KW-0201">Cytochrome c-type biogenesis</keyword>
<keyword id="KW-0472">Membrane</keyword>
<keyword id="KW-0547">Nucleotide-binding</keyword>
<keyword id="KW-1185">Reference proteome</keyword>
<keyword id="KW-1278">Translocase</keyword>
<keyword id="KW-0813">Transport</keyword>
<protein>
    <recommendedName>
        <fullName evidence="1">Cytochrome c biogenesis ATP-binding export protein CcmA</fullName>
        <ecNumber evidence="1">7.6.2.5</ecNumber>
    </recommendedName>
    <alternativeName>
        <fullName evidence="1">Heme exporter protein A</fullName>
    </alternativeName>
</protein>
<organism>
    <name type="scientific">Shigella flexneri</name>
    <dbReference type="NCBI Taxonomy" id="623"/>
    <lineage>
        <taxon>Bacteria</taxon>
        <taxon>Pseudomonadati</taxon>
        <taxon>Pseudomonadota</taxon>
        <taxon>Gammaproteobacteria</taxon>
        <taxon>Enterobacterales</taxon>
        <taxon>Enterobacteriaceae</taxon>
        <taxon>Shigella</taxon>
    </lineage>
</organism>
<comment type="function">
    <text evidence="1">Part of the ABC transporter complex CcmAB involved in the biogenesis of c-type cytochromes; once thought to export heme, this seems not to be the case, but its exact role is uncertain. Responsible for energy coupling to the transport system.</text>
</comment>
<comment type="catalytic activity">
    <reaction evidence="1">
        <text>heme b(in) + ATP + H2O = heme b(out) + ADP + phosphate + H(+)</text>
        <dbReference type="Rhea" id="RHEA:19261"/>
        <dbReference type="ChEBI" id="CHEBI:15377"/>
        <dbReference type="ChEBI" id="CHEBI:15378"/>
        <dbReference type="ChEBI" id="CHEBI:30616"/>
        <dbReference type="ChEBI" id="CHEBI:43474"/>
        <dbReference type="ChEBI" id="CHEBI:60344"/>
        <dbReference type="ChEBI" id="CHEBI:456216"/>
        <dbReference type="EC" id="7.6.2.5"/>
    </reaction>
</comment>
<comment type="subunit">
    <text evidence="1">The complex is composed of two ATP-binding proteins (CcmA) and two transmembrane proteins (CcmB).</text>
</comment>
<comment type="subcellular location">
    <subcellularLocation>
        <location evidence="1">Cell inner membrane</location>
        <topology evidence="1">Peripheral membrane protein</topology>
    </subcellularLocation>
</comment>
<comment type="similarity">
    <text evidence="1">Belongs to the ABC transporter superfamily. CcmA exporter (TC 3.A.1.107) family.</text>
</comment>
<gene>
    <name evidence="1" type="primary">ccmA</name>
    <name type="ordered locus">SF2285</name>
    <name type="ordered locus">S2415</name>
</gene>
<feature type="chain" id="PRO_0000092215" description="Cytochrome c biogenesis ATP-binding export protein CcmA">
    <location>
        <begin position="1"/>
        <end position="207"/>
    </location>
</feature>
<feature type="domain" description="ABC transporter" evidence="1">
    <location>
        <begin position="4"/>
        <end position="207"/>
    </location>
</feature>
<feature type="binding site" evidence="1">
    <location>
        <begin position="36"/>
        <end position="43"/>
    </location>
    <ligand>
        <name>ATP</name>
        <dbReference type="ChEBI" id="CHEBI:30616"/>
    </ligand>
</feature>
<sequence length="207" mass="23010">MGMLEARELLCERDERTLFSGLSFTLNAGEWVQITGSNGAGKTTLLRLLTGLSRPDAGEVLWQGQPLHQVRDSYHQTLLWIGHQPGIKTRLTALENLHFYHRDGDAAQCLEALAQAGLAGFEDIPVNQLSAGQQRRVALARLWLTRATLWILDEPFTAIDVNGVDRLTQRMAQHTEQGGIVILTTHQPLNVAESKIRRISLTQTRAA</sequence>
<accession>Q83KD5</accession>
<reference key="1">
    <citation type="journal article" date="2002" name="Nucleic Acids Res.">
        <title>Genome sequence of Shigella flexneri 2a: insights into pathogenicity through comparison with genomes of Escherichia coli K12 and O157.</title>
        <authorList>
            <person name="Jin Q."/>
            <person name="Yuan Z."/>
            <person name="Xu J."/>
            <person name="Wang Y."/>
            <person name="Shen Y."/>
            <person name="Lu W."/>
            <person name="Wang J."/>
            <person name="Liu H."/>
            <person name="Yang J."/>
            <person name="Yang F."/>
            <person name="Zhang X."/>
            <person name="Zhang J."/>
            <person name="Yang G."/>
            <person name="Wu H."/>
            <person name="Qu D."/>
            <person name="Dong J."/>
            <person name="Sun L."/>
            <person name="Xue Y."/>
            <person name="Zhao A."/>
            <person name="Gao Y."/>
            <person name="Zhu J."/>
            <person name="Kan B."/>
            <person name="Ding K."/>
            <person name="Chen S."/>
            <person name="Cheng H."/>
            <person name="Yao Z."/>
            <person name="He B."/>
            <person name="Chen R."/>
            <person name="Ma D."/>
            <person name="Qiang B."/>
            <person name="Wen Y."/>
            <person name="Hou Y."/>
            <person name="Yu J."/>
        </authorList>
    </citation>
    <scope>NUCLEOTIDE SEQUENCE [LARGE SCALE GENOMIC DNA]</scope>
    <source>
        <strain>301 / Serotype 2a</strain>
    </source>
</reference>
<reference key="2">
    <citation type="journal article" date="2003" name="Infect. Immun.">
        <title>Complete genome sequence and comparative genomics of Shigella flexneri serotype 2a strain 2457T.</title>
        <authorList>
            <person name="Wei J."/>
            <person name="Goldberg M.B."/>
            <person name="Burland V."/>
            <person name="Venkatesan M.M."/>
            <person name="Deng W."/>
            <person name="Fournier G."/>
            <person name="Mayhew G.F."/>
            <person name="Plunkett G. III"/>
            <person name="Rose D.J."/>
            <person name="Darling A."/>
            <person name="Mau B."/>
            <person name="Perna N.T."/>
            <person name="Payne S.M."/>
            <person name="Runyen-Janecky L.J."/>
            <person name="Zhou S."/>
            <person name="Schwartz D.C."/>
            <person name="Blattner F.R."/>
        </authorList>
    </citation>
    <scope>NUCLEOTIDE SEQUENCE [LARGE SCALE GENOMIC DNA]</scope>
    <source>
        <strain>ATCC 700930 / 2457T / Serotype 2a</strain>
    </source>
</reference>
<name>CCMA_SHIFL</name>
<evidence type="ECO:0000255" key="1">
    <source>
        <dbReference type="HAMAP-Rule" id="MF_01707"/>
    </source>
</evidence>
<dbReference type="EC" id="7.6.2.5" evidence="1"/>
<dbReference type="EMBL" id="AE005674">
    <property type="protein sequence ID" value="AAN43804.1"/>
    <property type="molecule type" value="Genomic_DNA"/>
</dbReference>
<dbReference type="EMBL" id="AE014073">
    <property type="protein sequence ID" value="AAP17621.1"/>
    <property type="molecule type" value="Genomic_DNA"/>
</dbReference>
<dbReference type="RefSeq" id="NP_708097.1">
    <property type="nucleotide sequence ID" value="NC_004337.2"/>
</dbReference>
<dbReference type="RefSeq" id="WP_000525596.1">
    <property type="nucleotide sequence ID" value="NZ_WPGW01000022.1"/>
</dbReference>
<dbReference type="SMR" id="Q83KD5"/>
<dbReference type="STRING" id="198214.SF2285"/>
<dbReference type="PaxDb" id="198214-SF2285"/>
<dbReference type="GeneID" id="1027260"/>
<dbReference type="KEGG" id="sfl:SF2285"/>
<dbReference type="KEGG" id="sfx:S2415"/>
<dbReference type="PATRIC" id="fig|198214.7.peg.2736"/>
<dbReference type="HOGENOM" id="CLU_000604_1_2_6"/>
<dbReference type="Proteomes" id="UP000001006">
    <property type="component" value="Chromosome"/>
</dbReference>
<dbReference type="Proteomes" id="UP000002673">
    <property type="component" value="Chromosome"/>
</dbReference>
<dbReference type="GO" id="GO:0005886">
    <property type="term" value="C:plasma membrane"/>
    <property type="evidence" value="ECO:0007669"/>
    <property type="project" value="UniProtKB-SubCell"/>
</dbReference>
<dbReference type="GO" id="GO:0015439">
    <property type="term" value="F:ABC-type heme transporter activity"/>
    <property type="evidence" value="ECO:0007669"/>
    <property type="project" value="UniProtKB-EC"/>
</dbReference>
<dbReference type="GO" id="GO:0005524">
    <property type="term" value="F:ATP binding"/>
    <property type="evidence" value="ECO:0007669"/>
    <property type="project" value="UniProtKB-KW"/>
</dbReference>
<dbReference type="GO" id="GO:0016887">
    <property type="term" value="F:ATP hydrolysis activity"/>
    <property type="evidence" value="ECO:0007669"/>
    <property type="project" value="InterPro"/>
</dbReference>
<dbReference type="GO" id="GO:0017004">
    <property type="term" value="P:cytochrome complex assembly"/>
    <property type="evidence" value="ECO:0007669"/>
    <property type="project" value="UniProtKB-KW"/>
</dbReference>
<dbReference type="CDD" id="cd03231">
    <property type="entry name" value="ABC_CcmA_heme_exporter"/>
    <property type="match status" value="1"/>
</dbReference>
<dbReference type="FunFam" id="3.40.50.300:FF:001098">
    <property type="entry name" value="Cytochrome c biogenesis ATP-binding export protein CcmA"/>
    <property type="match status" value="1"/>
</dbReference>
<dbReference type="Gene3D" id="3.40.50.300">
    <property type="entry name" value="P-loop containing nucleotide triphosphate hydrolases"/>
    <property type="match status" value="1"/>
</dbReference>
<dbReference type="InterPro" id="IPR003593">
    <property type="entry name" value="AAA+_ATPase"/>
</dbReference>
<dbReference type="InterPro" id="IPR003439">
    <property type="entry name" value="ABC_transporter-like_ATP-bd"/>
</dbReference>
<dbReference type="InterPro" id="IPR017871">
    <property type="entry name" value="ABC_transporter-like_CS"/>
</dbReference>
<dbReference type="InterPro" id="IPR005895">
    <property type="entry name" value="ABC_transptr_haem_export_CcmA"/>
</dbReference>
<dbReference type="InterPro" id="IPR027417">
    <property type="entry name" value="P-loop_NTPase"/>
</dbReference>
<dbReference type="NCBIfam" id="TIGR01189">
    <property type="entry name" value="ccmA"/>
    <property type="match status" value="1"/>
</dbReference>
<dbReference type="NCBIfam" id="NF010061">
    <property type="entry name" value="PRK13538.1"/>
    <property type="match status" value="1"/>
</dbReference>
<dbReference type="PANTHER" id="PTHR43499">
    <property type="entry name" value="ABC TRANSPORTER I FAMILY MEMBER 1"/>
    <property type="match status" value="1"/>
</dbReference>
<dbReference type="PANTHER" id="PTHR43499:SF1">
    <property type="entry name" value="ABC TRANSPORTER I FAMILY MEMBER 1"/>
    <property type="match status" value="1"/>
</dbReference>
<dbReference type="Pfam" id="PF00005">
    <property type="entry name" value="ABC_tran"/>
    <property type="match status" value="1"/>
</dbReference>
<dbReference type="SMART" id="SM00382">
    <property type="entry name" value="AAA"/>
    <property type="match status" value="1"/>
</dbReference>
<dbReference type="SUPFAM" id="SSF52540">
    <property type="entry name" value="P-loop containing nucleoside triphosphate hydrolases"/>
    <property type="match status" value="1"/>
</dbReference>
<dbReference type="PROSITE" id="PS00211">
    <property type="entry name" value="ABC_TRANSPORTER_1"/>
    <property type="match status" value="1"/>
</dbReference>
<dbReference type="PROSITE" id="PS50893">
    <property type="entry name" value="ABC_TRANSPORTER_2"/>
    <property type="match status" value="1"/>
</dbReference>
<dbReference type="PROSITE" id="PS51243">
    <property type="entry name" value="CCMA"/>
    <property type="match status" value="1"/>
</dbReference>
<proteinExistence type="inferred from homology"/>